<reference key="1">
    <citation type="submission" date="2011-12" db="EMBL/GenBank/DDBJ databases">
        <title>Complete genome sequence of Streptomyces cattleya strain DSM 46488.</title>
        <authorList>
            <person name="Ou H.-Y."/>
            <person name="Li P."/>
            <person name="Zhao C."/>
            <person name="O'Hagan D."/>
            <person name="Deng Z."/>
        </authorList>
    </citation>
    <scope>NUCLEOTIDE SEQUENCE [LARGE SCALE GENOMIC DNA]</scope>
    <source>
        <strain>ATCC 35852 / DSM 46488 / JCM 4925 / NBRC 14057 / NCIMB 11928 / NRRL 8057 / MA-4297</strain>
    </source>
</reference>
<reference key="2">
    <citation type="journal article" date="2019" name="Nature">
        <title>Discovery of a pathway for terminal-alkyne amino acid biosynthesis.</title>
        <authorList>
            <person name="Marchand J.A."/>
            <person name="Neugebauer M.E."/>
            <person name="Ing M.C."/>
            <person name="Lin C.I."/>
            <person name="Pelton J.G."/>
            <person name="Chang M.C.Y."/>
        </authorList>
    </citation>
    <scope>FUNCTION</scope>
    <scope>CATALYTIC ACTIVITY</scope>
    <scope>COFACTOR</scope>
    <scope>PATHWAY</scope>
    <scope>DISRUPTION PHENOTYPE</scope>
    <scope>REACTION MECHANISM</scope>
    <source>
        <strain>ATCC 35852 / DSM 46488 / JCM 4925 / NBRC 14057 / NCIMB 11928 / NRRL 8057 / MA-4297</strain>
    </source>
</reference>
<gene>
    <name evidence="3" type="primary">besB</name>
    <name evidence="6" type="ordered locus">SCATT_p06900</name>
</gene>
<keyword id="KW-0028">Amino-acid biosynthesis</keyword>
<keyword id="KW-0045">Antibiotic biosynthesis</keyword>
<keyword id="KW-0456">Lyase</keyword>
<keyword id="KW-0614">Plasmid</keyword>
<keyword id="KW-0663">Pyridoxal phosphate</keyword>
<keyword id="KW-1185">Reference proteome</keyword>
<feature type="chain" id="PRO_0000447352" description="L-2-amino-4-chloropent-4-enoate dechlorinase/desaturase">
    <location>
        <begin position="1"/>
        <end position="500"/>
    </location>
</feature>
<feature type="modified residue" description="N6-(pyridoxal phosphate)lysine" evidence="1">
    <location>
        <position position="311"/>
    </location>
</feature>
<sequence length="500" mass="52917">MSAGSPAEPRPVPGSVHSVSVSIPDVRSVIGFESGDPATLRRIAWGYPRFRTHPYVARVAALVAGAVGGRAQDLVLTRSVRAAEAAAAYAGLAPGAVFEASGVRGVRVAEDDPALAAVRGHVQHTGAHLTSREAEDVLLEAGLIEARQAEEAVSEEPAEAVRSALATAYGAGDPADVSLHNSGMNAVAAAVAAVTDLQRPAGRRRWIQLGWIFFDTMSLLDKRLFGTDHVTVPDPFDLAALSRVVAAHPGQLAGIIAELPSNPSLRCPDVPALREIADRAGCALVLDATIATPHNVDVLGYADVVCESLTKYATGSADVLMGAAVVGSASPWAAQLREGLRRFGDVPYHRDAARVAARIRDYGDRMKRVNAGAVALAGFLERQSAVRAVSWPYDAASQANYRKVERLSDAPGGLLMVDLRVPLERVYDRLAVAKGPSFGAEFTMASPQIFIAHFDLLSTPEGRAELRSRGLHRDMLRISVGVEDPELIAEVFRDAFDGAG</sequence>
<evidence type="ECO:0000250" key="1">
    <source>
        <dbReference type="UniProtKB" id="P06721"/>
    </source>
</evidence>
<evidence type="ECO:0000269" key="2">
    <source>
    </source>
</evidence>
<evidence type="ECO:0000303" key="3">
    <source>
    </source>
</evidence>
<evidence type="ECO:0000305" key="4"/>
<evidence type="ECO:0000305" key="5">
    <source>
    </source>
</evidence>
<evidence type="ECO:0000312" key="6">
    <source>
        <dbReference type="EMBL" id="AEW98883.1"/>
    </source>
</evidence>
<name>BESB_STREN</name>
<dbReference type="EC" id="4.5.1.-" evidence="2"/>
<dbReference type="EMBL" id="CP003229">
    <property type="protein sequence ID" value="AEW98883.1"/>
    <property type="status" value="ALT_INIT"/>
    <property type="molecule type" value="Genomic_DNA"/>
</dbReference>
<dbReference type="RefSeq" id="WP_042507713.1">
    <property type="nucleotide sequence ID" value="NC_017585.1"/>
</dbReference>
<dbReference type="SMR" id="G8XHD7"/>
<dbReference type="KEGG" id="scy:SCATT_p06900"/>
<dbReference type="PATRIC" id="fig|1003195.29.peg.6485"/>
<dbReference type="HOGENOM" id="CLU_011302_2_0_11"/>
<dbReference type="OrthoDB" id="262490at2"/>
<dbReference type="Proteomes" id="UP000007842">
    <property type="component" value="Plasmid pSCATT"/>
</dbReference>
<dbReference type="GO" id="GO:0003962">
    <property type="term" value="F:cystathionine gamma-synthase activity"/>
    <property type="evidence" value="ECO:0007669"/>
    <property type="project" value="TreeGrafter"/>
</dbReference>
<dbReference type="GO" id="GO:0062144">
    <property type="term" value="F:L-propargylglycine synthase activity"/>
    <property type="evidence" value="ECO:0000314"/>
    <property type="project" value="UniProtKB"/>
</dbReference>
<dbReference type="GO" id="GO:0030170">
    <property type="term" value="F:pyridoxal phosphate binding"/>
    <property type="evidence" value="ECO:0000303"/>
    <property type="project" value="UniProtKB"/>
</dbReference>
<dbReference type="GO" id="GO:0017000">
    <property type="term" value="P:antibiotic biosynthetic process"/>
    <property type="evidence" value="ECO:0007669"/>
    <property type="project" value="UniProtKB-KW"/>
</dbReference>
<dbReference type="GO" id="GO:0062142">
    <property type="term" value="P:L-beta-ethynylserine biosynthetic process"/>
    <property type="evidence" value="ECO:0000315"/>
    <property type="project" value="UniProtKB"/>
</dbReference>
<dbReference type="GO" id="GO:0062143">
    <property type="term" value="P:L-propargylglycine biosynthetic process"/>
    <property type="evidence" value="ECO:0000315"/>
    <property type="project" value="UniProtKB"/>
</dbReference>
<dbReference type="GO" id="GO:0019346">
    <property type="term" value="P:transsulfuration"/>
    <property type="evidence" value="ECO:0007669"/>
    <property type="project" value="InterPro"/>
</dbReference>
<dbReference type="Gene3D" id="3.90.1150.10">
    <property type="entry name" value="Aspartate Aminotransferase, domain 1"/>
    <property type="match status" value="1"/>
</dbReference>
<dbReference type="Gene3D" id="3.40.640.10">
    <property type="entry name" value="Type I PLP-dependent aspartate aminotransferase-like (Major domain)"/>
    <property type="match status" value="1"/>
</dbReference>
<dbReference type="InterPro" id="IPR000277">
    <property type="entry name" value="Cys/Met-Metab_PyrdxlP-dep_enz"/>
</dbReference>
<dbReference type="InterPro" id="IPR055001">
    <property type="entry name" value="PAGG_Syn_BesB"/>
</dbReference>
<dbReference type="InterPro" id="IPR015424">
    <property type="entry name" value="PyrdxlP-dep_Trfase"/>
</dbReference>
<dbReference type="InterPro" id="IPR015421">
    <property type="entry name" value="PyrdxlP-dep_Trfase_major"/>
</dbReference>
<dbReference type="InterPro" id="IPR015422">
    <property type="entry name" value="PyrdxlP-dep_Trfase_small"/>
</dbReference>
<dbReference type="InterPro" id="IPR051750">
    <property type="entry name" value="Trans-sulfuration_enzymes"/>
</dbReference>
<dbReference type="NCBIfam" id="NF042918">
    <property type="entry name" value="PAGG_Syn_BesB"/>
    <property type="match status" value="1"/>
</dbReference>
<dbReference type="PANTHER" id="PTHR42699">
    <property type="match status" value="1"/>
</dbReference>
<dbReference type="PANTHER" id="PTHR42699:SF1">
    <property type="entry name" value="CYSTATHIONINE GAMMA-SYNTHASE-RELATED"/>
    <property type="match status" value="1"/>
</dbReference>
<dbReference type="Pfam" id="PF01053">
    <property type="entry name" value="Cys_Met_Meta_PP"/>
    <property type="match status" value="1"/>
</dbReference>
<dbReference type="SUPFAM" id="SSF53383">
    <property type="entry name" value="PLP-dependent transferases"/>
    <property type="match status" value="1"/>
</dbReference>
<organism>
    <name type="scientific">Streptantibioticus cattleyicolor (strain ATCC 35852 / DSM 46488 / JCM 4925 / NBRC 14057 / NRRL 8057)</name>
    <name type="common">Streptomyces cattleya</name>
    <dbReference type="NCBI Taxonomy" id="1003195"/>
    <lineage>
        <taxon>Bacteria</taxon>
        <taxon>Bacillati</taxon>
        <taxon>Actinomycetota</taxon>
        <taxon>Actinomycetes</taxon>
        <taxon>Kitasatosporales</taxon>
        <taxon>Streptomycetaceae</taxon>
        <taxon>Streptantibioticus</taxon>
    </lineage>
</organism>
<comment type="function">
    <text evidence="2">Involved in the biosynthesis of terminal alkyne-containing amino acids such as L-propargylglycine (Pra) and L-beta-ethynylserine, that are produced as antibiotics by S.cattleya. Catalyzes gamma-elimination of chloride from 4-chloro-allyl-L-glycine (also named L-2-amino-4-chloropent-4-enoate), followed by an isomerization, to form the terminal-alkyne product L-propargylglycine.</text>
</comment>
<comment type="catalytic activity">
    <reaction evidence="2">
        <text>L-2-amino-4-chloropent-4-enoate = L-propargylglycine + chloride + H(+)</text>
        <dbReference type="Rhea" id="RHEA:59892"/>
        <dbReference type="ChEBI" id="CHEBI:15378"/>
        <dbReference type="ChEBI" id="CHEBI:17996"/>
        <dbReference type="ChEBI" id="CHEBI:57555"/>
        <dbReference type="ChEBI" id="CHEBI:143285"/>
    </reaction>
    <physiologicalReaction direction="left-to-right" evidence="2">
        <dbReference type="Rhea" id="RHEA:59893"/>
    </physiologicalReaction>
</comment>
<comment type="cofactor">
    <cofactor evidence="2">
        <name>pyridoxal 5'-phosphate</name>
        <dbReference type="ChEBI" id="CHEBI:597326"/>
    </cofactor>
</comment>
<comment type="pathway">
    <text evidence="2">Amino-acid metabolism.</text>
</comment>
<comment type="pathway">
    <text evidence="2">Antibiotic biosynthesis.</text>
</comment>
<comment type="disruption phenotype">
    <text evidence="2">Cells lacking this gene no longer produce detectable amounts of L-propargylglycine and L-beta-ethynylserine, that are terminal alkyne-containing amino acids produced by wild-type S.cattleya. They accumulate the intermediate 4-chloro-allyl-L-glycine.</text>
</comment>
<comment type="similarity">
    <text evidence="4">Belongs to the trans-sulfuration enzymes family.</text>
</comment>
<comment type="sequence caution" evidence="4">
    <conflict type="erroneous initiation">
        <sequence resource="EMBL-CDS" id="AEW98883"/>
    </conflict>
    <text>Truncated N-terminus.</text>
</comment>
<accession>G8XHD7</accession>
<protein>
    <recommendedName>
        <fullName evidence="5">L-2-amino-4-chloropent-4-enoate dechlorinase/desaturase</fullName>
        <ecNumber evidence="2">4.5.1.-</ecNumber>
    </recommendedName>
    <alternativeName>
        <fullName evidence="5">4-chloro-allyl-L-glycine acetylenase</fullName>
    </alternativeName>
    <alternativeName>
        <fullName evidence="5">L-propargylglycine synthase</fullName>
    </alternativeName>
</protein>
<proteinExistence type="evidence at protein level"/>
<geneLocation type="plasmid">
    <name>pSCATT</name>
</geneLocation>